<protein>
    <recommendedName>
        <fullName>Transcription activator of gluconeogenesis ARB_05058</fullName>
    </recommendedName>
</protein>
<organism>
    <name type="scientific">Arthroderma benhamiae (strain ATCC MYA-4681 / CBS 112371)</name>
    <name type="common">Trichophyton mentagrophytes</name>
    <dbReference type="NCBI Taxonomy" id="663331"/>
    <lineage>
        <taxon>Eukaryota</taxon>
        <taxon>Fungi</taxon>
        <taxon>Dikarya</taxon>
        <taxon>Ascomycota</taxon>
        <taxon>Pezizomycotina</taxon>
        <taxon>Eurotiomycetes</taxon>
        <taxon>Eurotiomycetidae</taxon>
        <taxon>Onygenales</taxon>
        <taxon>Arthrodermataceae</taxon>
        <taxon>Trichophyton</taxon>
    </lineage>
</organism>
<reference key="1">
    <citation type="journal article" date="2011" name="Genome Biol.">
        <title>Comparative and functional genomics provide insights into the pathogenicity of dermatophytic fungi.</title>
        <authorList>
            <person name="Burmester A."/>
            <person name="Shelest E."/>
            <person name="Gloeckner G."/>
            <person name="Heddergott C."/>
            <person name="Schindler S."/>
            <person name="Staib P."/>
            <person name="Heidel A."/>
            <person name="Felder M."/>
            <person name="Petzold A."/>
            <person name="Szafranski K."/>
            <person name="Feuermann M."/>
            <person name="Pedruzzi I."/>
            <person name="Priebe S."/>
            <person name="Groth M."/>
            <person name="Winkler R."/>
            <person name="Li W."/>
            <person name="Kniemeyer O."/>
            <person name="Schroeckh V."/>
            <person name="Hertweck C."/>
            <person name="Hube B."/>
            <person name="White T.C."/>
            <person name="Platzer M."/>
            <person name="Guthke R."/>
            <person name="Heitman J."/>
            <person name="Woestemeyer J."/>
            <person name="Zipfel P.F."/>
            <person name="Monod M."/>
            <person name="Brakhage A.A."/>
        </authorList>
    </citation>
    <scope>NUCLEOTIDE SEQUENCE [LARGE SCALE GENOMIC DNA]</scope>
    <source>
        <strain>ATCC MYA-4681 / CBS 112371</strain>
    </source>
</reference>
<accession>D4AL61</accession>
<comment type="function">
    <text evidence="1">Transcription factor which regulates nonfermentable carbon utilization. Activator of gluconeogenetic genes (By similarity).</text>
</comment>
<comment type="subcellular location">
    <subcellularLocation>
        <location evidence="2">Nucleus</location>
    </subcellularLocation>
</comment>
<comment type="similarity">
    <text evidence="4">Belongs to the ERT1/acuK family.</text>
</comment>
<dbReference type="EMBL" id="ABSU01000002">
    <property type="protein sequence ID" value="EFE36120.1"/>
    <property type="molecule type" value="Genomic_DNA"/>
</dbReference>
<dbReference type="RefSeq" id="XP_003016765.1">
    <property type="nucleotide sequence ID" value="XM_003016719.1"/>
</dbReference>
<dbReference type="SMR" id="D4AL61"/>
<dbReference type="GeneID" id="9522251"/>
<dbReference type="KEGG" id="abe:ARB_05058"/>
<dbReference type="eggNOG" id="ENOG502R1M5">
    <property type="taxonomic scope" value="Eukaryota"/>
</dbReference>
<dbReference type="HOGENOM" id="CLU_010748_1_0_1"/>
<dbReference type="OMA" id="VMTTCKL"/>
<dbReference type="Proteomes" id="UP000008866">
    <property type="component" value="Unassembled WGS sequence"/>
</dbReference>
<dbReference type="GO" id="GO:0005634">
    <property type="term" value="C:nucleus"/>
    <property type="evidence" value="ECO:0007669"/>
    <property type="project" value="UniProtKB-SubCell"/>
</dbReference>
<dbReference type="GO" id="GO:0000981">
    <property type="term" value="F:DNA-binding transcription factor activity, RNA polymerase II-specific"/>
    <property type="evidence" value="ECO:0007669"/>
    <property type="project" value="InterPro"/>
</dbReference>
<dbReference type="GO" id="GO:0000977">
    <property type="term" value="F:RNA polymerase II transcription regulatory region sequence-specific DNA binding"/>
    <property type="evidence" value="ECO:0007669"/>
    <property type="project" value="TreeGrafter"/>
</dbReference>
<dbReference type="GO" id="GO:0008270">
    <property type="term" value="F:zinc ion binding"/>
    <property type="evidence" value="ECO:0007669"/>
    <property type="project" value="InterPro"/>
</dbReference>
<dbReference type="GO" id="GO:0009267">
    <property type="term" value="P:cellular response to starvation"/>
    <property type="evidence" value="ECO:0007669"/>
    <property type="project" value="TreeGrafter"/>
</dbReference>
<dbReference type="GO" id="GO:0006094">
    <property type="term" value="P:gluconeogenesis"/>
    <property type="evidence" value="ECO:0007669"/>
    <property type="project" value="UniProtKB-KW"/>
</dbReference>
<dbReference type="CDD" id="cd00067">
    <property type="entry name" value="GAL4"/>
    <property type="match status" value="1"/>
</dbReference>
<dbReference type="InterPro" id="IPR050335">
    <property type="entry name" value="ERT1_acuK_gluconeogen_tf"/>
</dbReference>
<dbReference type="InterPro" id="IPR056751">
    <property type="entry name" value="PAS_13"/>
</dbReference>
<dbReference type="InterPro" id="IPR036864">
    <property type="entry name" value="Zn2-C6_fun-type_DNA-bd_sf"/>
</dbReference>
<dbReference type="InterPro" id="IPR001138">
    <property type="entry name" value="Zn2Cys6_DnaBD"/>
</dbReference>
<dbReference type="PANTHER" id="PTHR47659:SF1">
    <property type="entry name" value="TRANSCRIPTION ACTIVATOR OF GLUCONEOGENESIS ERT1"/>
    <property type="match status" value="1"/>
</dbReference>
<dbReference type="PANTHER" id="PTHR47659">
    <property type="entry name" value="ZN(II)2CYS6 TRANSCRIPTION FACTOR (EUROFUNG)-RELATED"/>
    <property type="match status" value="1"/>
</dbReference>
<dbReference type="Pfam" id="PF24990">
    <property type="entry name" value="PAS_13"/>
    <property type="match status" value="1"/>
</dbReference>
<dbReference type="SMART" id="SM00066">
    <property type="entry name" value="GAL4"/>
    <property type="match status" value="1"/>
</dbReference>
<dbReference type="SUPFAM" id="SSF57701">
    <property type="entry name" value="Zn2/Cys6 DNA-binding domain"/>
    <property type="match status" value="1"/>
</dbReference>
<dbReference type="PROSITE" id="PS50048">
    <property type="entry name" value="ZN2_CY6_FUNGAL_2"/>
    <property type="match status" value="1"/>
</dbReference>
<feature type="chain" id="PRO_0000406428" description="Transcription activator of gluconeogenesis ARB_05058">
    <location>
        <begin position="1"/>
        <end position="721"/>
    </location>
</feature>
<feature type="DNA-binding region" description="Zn(2)-C6 fungal-type" evidence="2">
    <location>
        <begin position="65"/>
        <end position="93"/>
    </location>
</feature>
<feature type="region of interest" description="Disordered" evidence="3">
    <location>
        <begin position="1"/>
        <end position="62"/>
    </location>
</feature>
<feature type="region of interest" description="Disordered" evidence="3">
    <location>
        <begin position="128"/>
        <end position="224"/>
    </location>
</feature>
<feature type="region of interest" description="Disordered" evidence="3">
    <location>
        <begin position="263"/>
        <end position="300"/>
    </location>
</feature>
<feature type="region of interest" description="Disordered" evidence="3">
    <location>
        <begin position="353"/>
        <end position="400"/>
    </location>
</feature>
<feature type="region of interest" description="Disordered" evidence="3">
    <location>
        <begin position="533"/>
        <end position="567"/>
    </location>
</feature>
<feature type="region of interest" description="Disordered" evidence="3">
    <location>
        <begin position="635"/>
        <end position="666"/>
    </location>
</feature>
<feature type="compositionally biased region" description="Polar residues" evidence="3">
    <location>
        <begin position="1"/>
        <end position="34"/>
    </location>
</feature>
<feature type="compositionally biased region" description="Basic and acidic residues" evidence="3">
    <location>
        <begin position="40"/>
        <end position="55"/>
    </location>
</feature>
<feature type="compositionally biased region" description="Polar residues" evidence="3">
    <location>
        <begin position="133"/>
        <end position="213"/>
    </location>
</feature>
<feature type="compositionally biased region" description="Polar residues" evidence="3">
    <location>
        <begin position="267"/>
        <end position="277"/>
    </location>
</feature>
<feature type="compositionally biased region" description="Polar residues" evidence="3">
    <location>
        <begin position="287"/>
        <end position="300"/>
    </location>
</feature>
<feature type="compositionally biased region" description="Polar residues" evidence="3">
    <location>
        <begin position="361"/>
        <end position="379"/>
    </location>
</feature>
<feature type="compositionally biased region" description="Low complexity" evidence="3">
    <location>
        <begin position="380"/>
        <end position="399"/>
    </location>
</feature>
<feature type="compositionally biased region" description="Low complexity" evidence="3">
    <location>
        <begin position="543"/>
        <end position="553"/>
    </location>
</feature>
<feature type="compositionally biased region" description="Polar residues" evidence="3">
    <location>
        <begin position="640"/>
        <end position="661"/>
    </location>
</feature>
<evidence type="ECO:0000250" key="1"/>
<evidence type="ECO:0000255" key="2">
    <source>
        <dbReference type="PROSITE-ProRule" id="PRU00227"/>
    </source>
</evidence>
<evidence type="ECO:0000256" key="3">
    <source>
        <dbReference type="SAM" id="MobiDB-lite"/>
    </source>
</evidence>
<evidence type="ECO:0000305" key="4"/>
<name>ACUK_ARTBC</name>
<keyword id="KW-0010">Activator</keyword>
<keyword id="KW-0238">DNA-binding</keyword>
<keyword id="KW-0312">Gluconeogenesis</keyword>
<keyword id="KW-0479">Metal-binding</keyword>
<keyword id="KW-0539">Nucleus</keyword>
<keyword id="KW-1185">Reference proteome</keyword>
<keyword id="KW-0804">Transcription</keyword>
<keyword id="KW-0805">Transcription regulation</keyword>
<keyword id="KW-0862">Zinc</keyword>
<gene>
    <name type="ORF">ARB_05058</name>
</gene>
<sequence>MSPHQTTGQESDNMTVNGENAQASSQYIQSNEEMTSAIATEKKASTAKAAKDPSRPKRKKAKRACYACQRGHLTCGDERPCQRCIKRGFQDACHDGVRKKAKYLHDAPNEALMAGVGATLYNQRNAAQNNANGSNTSPGAPQQITSPNFYNTQQSPDYNGFPQNKTELQDSTVGPDNYASQSPVSPTYQISQGLSTQGLSPSLPQSTSETPSAANPAPGQFNSAFFDPSDPALFNFDLASMNFGNHYGALEFGMLGHMATGVGDTPPSESGAQRGSIGQNGSGTFGLTGSNFSESPSNQAPYLFSESGMNDWTQTAPVNRRSMYGSNANLVAGNMSDKPHAFAIESAPANFASPASNESPMMTTSSATFEDTTNSGAFNSRQNVPVSQQRQQPVVSTPQLKQQNLNLGSRRRHKNASSIYDSVKDPYSYTSGFHSLTAFIQRRFSPQKTLRIAKALASIRPSFIATTKTLNRDDLIFMEKCFQRTLWEYEDFINACGTPTIVCRRTGEIAAVGKEFSILTGWKKEVLLGKEPNHNVNTGGSSGLMTGSTSRGSYTPRPYSSEVYNSSATATPRTQPVFLAELLDDDSVIEFYEDFAKLAFGDSRGSVMTTCKLLKYKTKAESDILAGSNGEADAGLNGEAASNETNELNGSLTNGATTNGRGQRRWGKGEIAGEAGMNQLGFRDGKVECSYCWTVKRDVFDIPMLIVMNVSCLCLEPLSEP</sequence>
<proteinExistence type="inferred from homology"/>